<feature type="signal peptide" evidence="3">
    <location>
        <begin position="1" status="less than"/>
        <end position="10"/>
    </location>
</feature>
<feature type="propeptide" id="PRO_0000003271" evidence="3">
    <location>
        <begin position="11"/>
        <end position="24"/>
    </location>
</feature>
<feature type="chain" id="PRO_0000003272" description="Seed trypsin/chymotrypsin inhibitor IVA">
    <location>
        <begin position="25"/>
        <end position="96"/>
    </location>
</feature>
<feature type="chain" id="PRO_0000003273" description="Seed trypsin/chymotrypsin inhibitor I">
    <location>
        <begin position="25"/>
        <end position="87"/>
    </location>
</feature>
<feature type="propeptide" id="PRO_0000003274" description="Removed in PSTI I">
    <location>
        <begin position="88"/>
        <end position="96"/>
    </location>
</feature>
<feature type="site" description="Reactive bond for trypsin" evidence="1">
    <location>
        <begin position="40"/>
        <end position="41"/>
    </location>
</feature>
<feature type="site" description="Reactive bond for chymotrypsin" evidence="1">
    <location>
        <begin position="66"/>
        <end position="67"/>
    </location>
</feature>
<feature type="disulfide bond" evidence="2">
    <location>
        <begin position="32"/>
        <end position="85"/>
    </location>
</feature>
<feature type="disulfide bond" evidence="2">
    <location>
        <begin position="33"/>
        <end position="48"/>
    </location>
</feature>
<feature type="disulfide bond" evidence="2">
    <location>
        <begin position="36"/>
        <end position="81"/>
    </location>
</feature>
<feature type="disulfide bond" evidence="2">
    <location>
        <begin position="38"/>
        <end position="46"/>
    </location>
</feature>
<feature type="disulfide bond" evidence="2">
    <location>
        <begin position="55"/>
        <end position="62"/>
    </location>
</feature>
<feature type="disulfide bond" evidence="2">
    <location>
        <begin position="59"/>
        <end position="74"/>
    </location>
</feature>
<feature type="disulfide bond" evidence="2">
    <location>
        <begin position="64"/>
        <end position="72"/>
    </location>
</feature>
<feature type="sequence conflict" description="In Ref. 1; AA sequence." evidence="4" ref="1">
    <original>R</original>
    <variation>G</variation>
    <location>
        <position position="52"/>
    </location>
</feature>
<feature type="non-terminal residue">
    <location>
        <position position="1"/>
    </location>
</feature>
<reference key="1">
    <citation type="journal article" date="1995" name="FEBS Lett.">
        <title>Multiple isoforms of Pisum trypsin inhibitors result from modification of two primary gene products.</title>
        <authorList>
            <person name="Domoney C."/>
            <person name="Welham T."/>
            <person name="Sidebottom C."/>
            <person name="Firmin J.-L."/>
        </authorList>
    </citation>
    <scope>NUCLEOTIDE SEQUENCE [MRNA]</scope>
    <scope>PROTEIN SEQUENCE OF 25-56</scope>
    <source>
        <strain>cv. Birte</strain>
        <strain>cv. JI 2</strain>
    </source>
</reference>
<reference key="2">
    <citation type="journal article" date="1995" name="J. Protein Chem.">
        <title>Amino acid sequence of a Bowman-Birk proteinase inhibitor from pea seeds.</title>
        <authorList>
            <person name="Ferrasson E."/>
            <person name="Quillien L."/>
            <person name="Gueguen J."/>
        </authorList>
    </citation>
    <scope>PROTEIN SEQUENCE OF 25-96</scope>
    <source>
        <strain>cv. Frilene</strain>
        <tissue>Seed</tissue>
    </source>
</reference>
<reference key="3">
    <citation type="journal article" date="1997" name="J. Protein Chem.">
        <title>Trypsin inhibitor polymorphism: multigene family expression and posttranslational modification.</title>
        <authorList>
            <person name="Quillien L."/>
            <person name="Ferrasson E."/>
            <person name="Molle D."/>
            <person name="Gueguen J."/>
        </authorList>
    </citation>
    <scope>PROTEOLYTIC PROCESSING</scope>
    <source>
        <strain>cv. Frilene</strain>
        <tissue>Seed</tissue>
    </source>
</reference>
<name>IBBA_PEA</name>
<accession>Q41065</accession>
<protein>
    <recommendedName>
        <fullName>Seed trypsin/chymotrypsin inhibitor IVA</fullName>
        <shortName>PSTI IVA</shortName>
    </recommendedName>
    <alternativeName>
        <fullName>TI12-36</fullName>
    </alternativeName>
    <component>
        <recommendedName>
            <fullName>Seed trypsin/chymotrypsin inhibitor I</fullName>
            <shortName>PSTI I</shortName>
        </recommendedName>
    </component>
</protein>
<evidence type="ECO:0000250" key="1"/>
<evidence type="ECO:0000250" key="2">
    <source>
        <dbReference type="UniProtKB" id="P80321"/>
    </source>
</evidence>
<evidence type="ECO:0000255" key="3"/>
<evidence type="ECO:0000305" key="4"/>
<organism>
    <name type="scientific">Pisum sativum</name>
    <name type="common">Garden pea</name>
    <name type="synonym">Lathyrus oleraceus</name>
    <dbReference type="NCBI Taxonomy" id="3888"/>
    <lineage>
        <taxon>Eukaryota</taxon>
        <taxon>Viridiplantae</taxon>
        <taxon>Streptophyta</taxon>
        <taxon>Embryophyta</taxon>
        <taxon>Tracheophyta</taxon>
        <taxon>Spermatophyta</taxon>
        <taxon>Magnoliopsida</taxon>
        <taxon>eudicotyledons</taxon>
        <taxon>Gunneridae</taxon>
        <taxon>Pentapetalae</taxon>
        <taxon>rosids</taxon>
        <taxon>fabids</taxon>
        <taxon>Fabales</taxon>
        <taxon>Fabaceae</taxon>
        <taxon>Papilionoideae</taxon>
        <taxon>50 kb inversion clade</taxon>
        <taxon>NPAAA clade</taxon>
        <taxon>Hologalegina</taxon>
        <taxon>IRL clade</taxon>
        <taxon>Fabeae</taxon>
        <taxon>Pisum</taxon>
    </lineage>
</organism>
<keyword id="KW-0903">Direct protein sequencing</keyword>
<keyword id="KW-1015">Disulfide bond</keyword>
<keyword id="KW-0646">Protease inhibitor</keyword>
<keyword id="KW-0722">Serine protease inhibitor</keyword>
<keyword id="KW-0732">Signal</keyword>
<proteinExistence type="evidence at protein level"/>
<comment type="function">
    <text>Inhibitor of trypsin and of chymotrypsin. May function as a natural phytochemical defense against predators.</text>
</comment>
<comment type="tissue specificity">
    <text>Seed.</text>
</comment>
<comment type="developmental stage">
    <text>During desiccation stage of seed development increasing activity seems to be associated with appearance of isoform I (PSTI I) which has a stronger affinity for trypsin.</text>
</comment>
<comment type="similarity">
    <text evidence="4">Belongs to the Bowman-Birk serine protease inhibitor family.</text>
</comment>
<gene>
    <name type="primary">TI1236</name>
</gene>
<sequence length="96" mass="10544">LSFAANVVNARFDSTSFITQVLSNGDDVKSACCDTCLCTKSNPPTCRCVDVRETCHSACDSCICAYSNPPKCQCFDTHKFCYKACHNSEVEEVIKN</sequence>
<dbReference type="EMBL" id="X83211">
    <property type="protein sequence ID" value="CAA58213.1"/>
    <property type="molecule type" value="mRNA"/>
</dbReference>
<dbReference type="PIR" id="S69007">
    <property type="entry name" value="S69007"/>
</dbReference>
<dbReference type="SMR" id="Q41065"/>
<dbReference type="MEROPS" id="I12.018"/>
<dbReference type="GO" id="GO:0005576">
    <property type="term" value="C:extracellular region"/>
    <property type="evidence" value="ECO:0007669"/>
    <property type="project" value="InterPro"/>
</dbReference>
<dbReference type="GO" id="GO:0004867">
    <property type="term" value="F:serine-type endopeptidase inhibitor activity"/>
    <property type="evidence" value="ECO:0007669"/>
    <property type="project" value="UniProtKB-KW"/>
</dbReference>
<dbReference type="CDD" id="cd00023">
    <property type="entry name" value="BBI"/>
    <property type="match status" value="1"/>
</dbReference>
<dbReference type="FunFam" id="2.10.69.10:FF:000001">
    <property type="entry name" value="Bowman-Birk type proteinase inhibitor"/>
    <property type="match status" value="1"/>
</dbReference>
<dbReference type="Gene3D" id="2.10.69.10">
    <property type="entry name" value="Cysteine Protease (Bromelain) Inhibitor, subunit H"/>
    <property type="match status" value="1"/>
</dbReference>
<dbReference type="InterPro" id="IPR035995">
    <property type="entry name" value="Bowman-Birk_prot_inh"/>
</dbReference>
<dbReference type="InterPro" id="IPR000877">
    <property type="entry name" value="Prot_inh_BBI"/>
</dbReference>
<dbReference type="PANTHER" id="PTHR33479">
    <property type="entry name" value="BOWMAN-BIRK TYPE BRAN TRYPSIN INHIBITOR"/>
    <property type="match status" value="1"/>
</dbReference>
<dbReference type="PANTHER" id="PTHR33479:SF19">
    <property type="entry name" value="BOWMAN-BIRK TYPE PROTEINASE INHIBITOR C-II"/>
    <property type="match status" value="1"/>
</dbReference>
<dbReference type="Pfam" id="PF00228">
    <property type="entry name" value="Bowman-Birk_leg"/>
    <property type="match status" value="2"/>
</dbReference>
<dbReference type="SMART" id="SM00269">
    <property type="entry name" value="BowB"/>
    <property type="match status" value="1"/>
</dbReference>
<dbReference type="SUPFAM" id="SSF57247">
    <property type="entry name" value="Bowman-Birk inhibitor, BBI"/>
    <property type="match status" value="1"/>
</dbReference>
<dbReference type="PROSITE" id="PS00281">
    <property type="entry name" value="BOWMAN_BIRK"/>
    <property type="match status" value="1"/>
</dbReference>